<keyword id="KW-0963">Cytoplasm</keyword>
<keyword id="KW-1015">Disulfide bond</keyword>
<keyword id="KW-0340">Growth factor binding</keyword>
<keyword id="KW-0378">Hydrolase</keyword>
<keyword id="KW-0645">Protease</keyword>
<keyword id="KW-1185">Reference proteome</keyword>
<keyword id="KW-0964">Secreted</keyword>
<keyword id="KW-0720">Serine protease</keyword>
<keyword id="KW-0732">Signal</keyword>
<organism>
    <name type="scientific">Danio rerio</name>
    <name type="common">Zebrafish</name>
    <name type="synonym">Brachydanio rerio</name>
    <dbReference type="NCBI Taxonomy" id="7955"/>
    <lineage>
        <taxon>Eukaryota</taxon>
        <taxon>Metazoa</taxon>
        <taxon>Chordata</taxon>
        <taxon>Craniata</taxon>
        <taxon>Vertebrata</taxon>
        <taxon>Euteleostomi</taxon>
        <taxon>Actinopterygii</taxon>
        <taxon>Neopterygii</taxon>
        <taxon>Teleostei</taxon>
        <taxon>Ostariophysi</taxon>
        <taxon>Cypriniformes</taxon>
        <taxon>Danionidae</taxon>
        <taxon>Danioninae</taxon>
        <taxon>Danio</taxon>
    </lineage>
</organism>
<accession>A9JRB3</accession>
<name>HTR1B_DANRE</name>
<dbReference type="EC" id="3.4.21.-"/>
<dbReference type="EMBL" id="CR450788">
    <property type="status" value="NOT_ANNOTATED_CDS"/>
    <property type="molecule type" value="Genomic_DNA"/>
</dbReference>
<dbReference type="EMBL" id="BC155591">
    <property type="protein sequence ID" value="AAI55592.1"/>
    <property type="molecule type" value="mRNA"/>
</dbReference>
<dbReference type="RefSeq" id="NP_001104652.1">
    <property type="nucleotide sequence ID" value="NM_001111182.1"/>
</dbReference>
<dbReference type="SMR" id="A9JRB3"/>
<dbReference type="FunCoup" id="A9JRB3">
    <property type="interactions" value="108"/>
</dbReference>
<dbReference type="STRING" id="7955.ENSDARP00000020528"/>
<dbReference type="PaxDb" id="7955-ENSDARP00000020528"/>
<dbReference type="PeptideAtlas" id="A9JRB3"/>
<dbReference type="Ensembl" id="ENSDART00000012318">
    <property type="protein sequence ID" value="ENSDARP00000020528"/>
    <property type="gene ID" value="ENSDARG00000014907"/>
</dbReference>
<dbReference type="GeneID" id="565082"/>
<dbReference type="KEGG" id="dre:565082"/>
<dbReference type="AGR" id="ZFIN:ZDB-GENE-080219-7"/>
<dbReference type="CTD" id="565082"/>
<dbReference type="ZFIN" id="ZDB-GENE-080219-7">
    <property type="gene designation" value="htra1b"/>
</dbReference>
<dbReference type="eggNOG" id="KOG1320">
    <property type="taxonomic scope" value="Eukaryota"/>
</dbReference>
<dbReference type="HOGENOM" id="CLU_020120_6_2_1"/>
<dbReference type="InParanoid" id="A9JRB3"/>
<dbReference type="OMA" id="SVNFRMG"/>
<dbReference type="OrthoDB" id="4217619at2759"/>
<dbReference type="PhylomeDB" id="A9JRB3"/>
<dbReference type="TreeFam" id="TF323480"/>
<dbReference type="PRO" id="PR:A9JRB3"/>
<dbReference type="Proteomes" id="UP000000437">
    <property type="component" value="Chromosome 12"/>
</dbReference>
<dbReference type="Bgee" id="ENSDARG00000014907">
    <property type="expression patterns" value="Expressed in swim bladder and 15 other cell types or tissues"/>
</dbReference>
<dbReference type="GO" id="GO:0062023">
    <property type="term" value="C:collagen-containing extracellular matrix"/>
    <property type="evidence" value="ECO:0000318"/>
    <property type="project" value="GO_Central"/>
</dbReference>
<dbReference type="GO" id="GO:0005829">
    <property type="term" value="C:cytosol"/>
    <property type="evidence" value="ECO:0007669"/>
    <property type="project" value="UniProtKB-SubCell"/>
</dbReference>
<dbReference type="GO" id="GO:0005576">
    <property type="term" value="C:extracellular region"/>
    <property type="evidence" value="ECO:0007669"/>
    <property type="project" value="UniProtKB-SubCell"/>
</dbReference>
<dbReference type="GO" id="GO:0019838">
    <property type="term" value="F:growth factor binding"/>
    <property type="evidence" value="ECO:0007669"/>
    <property type="project" value="UniProtKB-KW"/>
</dbReference>
<dbReference type="GO" id="GO:0004252">
    <property type="term" value="F:serine-type endopeptidase activity"/>
    <property type="evidence" value="ECO:0000318"/>
    <property type="project" value="GO_Central"/>
</dbReference>
<dbReference type="GO" id="GO:0043065">
    <property type="term" value="P:positive regulation of apoptotic process"/>
    <property type="evidence" value="ECO:0000318"/>
    <property type="project" value="GO_Central"/>
</dbReference>
<dbReference type="GO" id="GO:0012501">
    <property type="term" value="P:programmed cell death"/>
    <property type="evidence" value="ECO:0000318"/>
    <property type="project" value="GO_Central"/>
</dbReference>
<dbReference type="GO" id="GO:0006508">
    <property type="term" value="P:proteolysis"/>
    <property type="evidence" value="ECO:0000318"/>
    <property type="project" value="GO_Central"/>
</dbReference>
<dbReference type="CDD" id="cd06785">
    <property type="entry name" value="cpPDZ_HtrA-like"/>
    <property type="match status" value="1"/>
</dbReference>
<dbReference type="CDD" id="cd00104">
    <property type="entry name" value="KAZAL_FS"/>
    <property type="match status" value="1"/>
</dbReference>
<dbReference type="FunFam" id="2.40.10.120:FF:000002">
    <property type="entry name" value="HtrA serine peptidase 3"/>
    <property type="match status" value="1"/>
</dbReference>
<dbReference type="FunFam" id="3.30.60.30:FF:000026">
    <property type="entry name" value="Insulin-like growth factor-binding protein 7"/>
    <property type="match status" value="1"/>
</dbReference>
<dbReference type="FunFam" id="2.30.42.10:FF:000142">
    <property type="entry name" value="Serine protease HTRA1"/>
    <property type="match status" value="1"/>
</dbReference>
<dbReference type="Gene3D" id="2.30.42.10">
    <property type="match status" value="1"/>
</dbReference>
<dbReference type="Gene3D" id="2.40.10.120">
    <property type="match status" value="1"/>
</dbReference>
<dbReference type="Gene3D" id="3.30.60.30">
    <property type="match status" value="1"/>
</dbReference>
<dbReference type="Gene3D" id="4.10.40.20">
    <property type="match status" value="1"/>
</dbReference>
<dbReference type="InterPro" id="IPR009030">
    <property type="entry name" value="Growth_fac_rcpt_cys_sf"/>
</dbReference>
<dbReference type="InterPro" id="IPR000867">
    <property type="entry name" value="IGFBP-like"/>
</dbReference>
<dbReference type="InterPro" id="IPR002350">
    <property type="entry name" value="Kazal_dom"/>
</dbReference>
<dbReference type="InterPro" id="IPR036058">
    <property type="entry name" value="Kazal_dom_sf"/>
</dbReference>
<dbReference type="InterPro" id="IPR001478">
    <property type="entry name" value="PDZ"/>
</dbReference>
<dbReference type="InterPro" id="IPR041489">
    <property type="entry name" value="PDZ_6"/>
</dbReference>
<dbReference type="InterPro" id="IPR036034">
    <property type="entry name" value="PDZ_sf"/>
</dbReference>
<dbReference type="InterPro" id="IPR009003">
    <property type="entry name" value="Peptidase_S1_PA"/>
</dbReference>
<dbReference type="InterPro" id="IPR001940">
    <property type="entry name" value="Peptidase_S1C"/>
</dbReference>
<dbReference type="PANTHER" id="PTHR22939">
    <property type="entry name" value="SERINE PROTEASE FAMILY S1C HTRA-RELATED"/>
    <property type="match status" value="1"/>
</dbReference>
<dbReference type="PANTHER" id="PTHR22939:SF13">
    <property type="entry name" value="SERINE PROTEASE HTRA1"/>
    <property type="match status" value="1"/>
</dbReference>
<dbReference type="Pfam" id="PF00219">
    <property type="entry name" value="IGFBP"/>
    <property type="match status" value="1"/>
</dbReference>
<dbReference type="Pfam" id="PF07648">
    <property type="entry name" value="Kazal_2"/>
    <property type="match status" value="1"/>
</dbReference>
<dbReference type="Pfam" id="PF17820">
    <property type="entry name" value="PDZ_6"/>
    <property type="match status" value="1"/>
</dbReference>
<dbReference type="Pfam" id="PF13365">
    <property type="entry name" value="Trypsin_2"/>
    <property type="match status" value="1"/>
</dbReference>
<dbReference type="PRINTS" id="PR00834">
    <property type="entry name" value="PROTEASES2C"/>
</dbReference>
<dbReference type="SMART" id="SM00121">
    <property type="entry name" value="IB"/>
    <property type="match status" value="1"/>
</dbReference>
<dbReference type="SMART" id="SM00280">
    <property type="entry name" value="KAZAL"/>
    <property type="match status" value="1"/>
</dbReference>
<dbReference type="SMART" id="SM00228">
    <property type="entry name" value="PDZ"/>
    <property type="match status" value="1"/>
</dbReference>
<dbReference type="SUPFAM" id="SSF57184">
    <property type="entry name" value="Growth factor receptor domain"/>
    <property type="match status" value="1"/>
</dbReference>
<dbReference type="SUPFAM" id="SSF100895">
    <property type="entry name" value="Kazal-type serine protease inhibitors"/>
    <property type="match status" value="1"/>
</dbReference>
<dbReference type="SUPFAM" id="SSF50156">
    <property type="entry name" value="PDZ domain-like"/>
    <property type="match status" value="1"/>
</dbReference>
<dbReference type="SUPFAM" id="SSF50494">
    <property type="entry name" value="Trypsin-like serine proteases"/>
    <property type="match status" value="1"/>
</dbReference>
<dbReference type="PROSITE" id="PS51323">
    <property type="entry name" value="IGFBP_N_2"/>
    <property type="match status" value="1"/>
</dbReference>
<dbReference type="PROSITE" id="PS51465">
    <property type="entry name" value="KAZAL_2"/>
    <property type="match status" value="1"/>
</dbReference>
<dbReference type="PROSITE" id="PS50106">
    <property type="entry name" value="PDZ"/>
    <property type="match status" value="1"/>
</dbReference>
<protein>
    <recommendedName>
        <fullName>Serine protease HTRA1B</fullName>
        <ecNumber>3.4.21.-</ecNumber>
    </recommendedName>
    <alternativeName>
        <fullName>High-temperature requirement A serine peptidase 1B</fullName>
    </alternativeName>
</protein>
<gene>
    <name type="primary">htra1b</name>
    <name type="ORF">zgc:172061</name>
</gene>
<proteinExistence type="evidence at transcript level"/>
<sequence>MRLLILCASIILVPLLCDARIIKRYVIGCPERCDKSLCPPIPPDCLAGDILDQCDCCPVCAAGEGESCGGTGKLGDPECGEGLECAVSDGVGATTTVRRRGKTGVCVCKSSEPVCGSDGVSYRNICELKRVSNRAQKLQQPPIIFIQRGACGKGHEENPDSLRHRYNFIADVVEKIAPAVVHIELFRKNVFNREVAVASGSGFVVSEDGLIVTNAHVVANKHRVKVELKTGTTYDAKIKDVDEKADIALIKIDAPMKLPVLLLGRSADLRPGEFVVAIGSPFSLQNTVTTGIVSTTQRGGKELGLRNSDMDYIQTDAIINYGNSGGPLVNLDGEVIGINTLKVTAGISFAIPSDKIRQFLAESHDRQAKGKTATKKKYIGVRMMTLTPTLAKELKQRKNDFPDVTSGAYVIEVIPKTPAEVGGLKESDVIISINGQRITSASDVSTAIKTDESLRAVVRRGNEDIILTIIPEEIDP</sequence>
<evidence type="ECO:0000250" key="1"/>
<evidence type="ECO:0000250" key="2">
    <source>
        <dbReference type="UniProtKB" id="Q92743"/>
    </source>
</evidence>
<evidence type="ECO:0000255" key="3"/>
<evidence type="ECO:0000255" key="4">
    <source>
        <dbReference type="PROSITE-ProRule" id="PRU00143"/>
    </source>
</evidence>
<evidence type="ECO:0000255" key="5">
    <source>
        <dbReference type="PROSITE-ProRule" id="PRU00653"/>
    </source>
</evidence>
<evidence type="ECO:0000255" key="6">
    <source>
        <dbReference type="PROSITE-ProRule" id="PRU00798"/>
    </source>
</evidence>
<evidence type="ECO:0000305" key="7"/>
<feature type="signal peptide" evidence="3">
    <location>
        <begin position="1"/>
        <end position="19"/>
    </location>
</feature>
<feature type="chain" id="PRO_0000416253" description="Serine protease HTRA1B">
    <location>
        <begin position="20"/>
        <end position="476"/>
    </location>
</feature>
<feature type="domain" description="IGFBP N-terminal" evidence="5">
    <location>
        <begin position="25"/>
        <end position="109"/>
    </location>
</feature>
<feature type="domain" description="Kazal-like" evidence="6">
    <location>
        <begin position="94"/>
        <end position="153"/>
    </location>
</feature>
<feature type="domain" description="PDZ" evidence="4">
    <location>
        <begin position="361"/>
        <end position="463"/>
    </location>
</feature>
<feature type="region of interest" description="Serine protease" evidence="1">
    <location>
        <begin position="200"/>
        <end position="360"/>
    </location>
</feature>
<feature type="active site" description="Charge relay system" evidence="2">
    <location>
        <position position="216"/>
    </location>
</feature>
<feature type="active site" description="Charge relay system" evidence="2">
    <location>
        <position position="246"/>
    </location>
</feature>
<feature type="active site" description="Charge relay system" evidence="2">
    <location>
        <position position="324"/>
    </location>
</feature>
<feature type="site" description="Involved in trimer stabilization" evidence="2">
    <location>
        <position position="166"/>
    </location>
</feature>
<feature type="site" description="Involved in trimer stabilization" evidence="2">
    <location>
        <position position="168"/>
    </location>
</feature>
<feature type="site" description="Involved in trimer stabilization" evidence="2">
    <location>
        <position position="274"/>
    </location>
</feature>
<feature type="disulfide bond" evidence="5">
    <location>
        <begin position="29"/>
        <end position="54"/>
    </location>
</feature>
<feature type="disulfide bond" evidence="5">
    <location>
        <begin position="33"/>
        <end position="56"/>
    </location>
</feature>
<feature type="disulfide bond" evidence="5">
    <location>
        <begin position="38"/>
        <end position="57"/>
    </location>
</feature>
<feature type="disulfide bond" evidence="5">
    <location>
        <begin position="45"/>
        <end position="60"/>
    </location>
</feature>
<feature type="disulfide bond" evidence="5">
    <location>
        <begin position="68"/>
        <end position="85"/>
    </location>
</feature>
<feature type="disulfide bond" evidence="5">
    <location>
        <begin position="79"/>
        <end position="106"/>
    </location>
</feature>
<comment type="function">
    <text evidence="1">Serine protease with a variety of targets, including extracellular matrix proteins and proteoglycans. Through cleavage of proteoglycans, may release soluble FGF-glycosaminoglycan complexes that promote the range and intensity of FGF signals in the extracellular space. Regulates the availability of insulin-like growth factors (IGFs) by cleaving IGF-binding proteins. Inhibits signaling mediated by TGF-beta family members. Consequently, may regulate many physiological processes. Intracellularly, degrades TSC2, leading to the activation of TSC2 downstream targets (By similarity).</text>
</comment>
<comment type="subunit">
    <text evidence="1">Forms homotrimers. In the presence of substrate, may form higher-order multimers in a PDZ-independent manner.</text>
</comment>
<comment type="subcellular location">
    <subcellularLocation>
        <location evidence="1">Secreted</location>
    </subcellularLocation>
    <subcellularLocation>
        <location evidence="1">Cytoplasm</location>
        <location evidence="1">Cytosol</location>
    </subcellularLocation>
    <text evidence="1">Also found associated with the plasma membrane.</text>
</comment>
<comment type="similarity">
    <text evidence="7">Belongs to the peptidase S1C family.</text>
</comment>
<reference key="1">
    <citation type="journal article" date="2013" name="Nature">
        <title>The zebrafish reference genome sequence and its relationship to the human genome.</title>
        <authorList>
            <person name="Howe K."/>
            <person name="Clark M.D."/>
            <person name="Torroja C.F."/>
            <person name="Torrance J."/>
            <person name="Berthelot C."/>
            <person name="Muffato M."/>
            <person name="Collins J.E."/>
            <person name="Humphray S."/>
            <person name="McLaren K."/>
            <person name="Matthews L."/>
            <person name="McLaren S."/>
            <person name="Sealy I."/>
            <person name="Caccamo M."/>
            <person name="Churcher C."/>
            <person name="Scott C."/>
            <person name="Barrett J.C."/>
            <person name="Koch R."/>
            <person name="Rauch G.J."/>
            <person name="White S."/>
            <person name="Chow W."/>
            <person name="Kilian B."/>
            <person name="Quintais L.T."/>
            <person name="Guerra-Assuncao J.A."/>
            <person name="Zhou Y."/>
            <person name="Gu Y."/>
            <person name="Yen J."/>
            <person name="Vogel J.H."/>
            <person name="Eyre T."/>
            <person name="Redmond S."/>
            <person name="Banerjee R."/>
            <person name="Chi J."/>
            <person name="Fu B."/>
            <person name="Langley E."/>
            <person name="Maguire S.F."/>
            <person name="Laird G.K."/>
            <person name="Lloyd D."/>
            <person name="Kenyon E."/>
            <person name="Donaldson S."/>
            <person name="Sehra H."/>
            <person name="Almeida-King J."/>
            <person name="Loveland J."/>
            <person name="Trevanion S."/>
            <person name="Jones M."/>
            <person name="Quail M."/>
            <person name="Willey D."/>
            <person name="Hunt A."/>
            <person name="Burton J."/>
            <person name="Sims S."/>
            <person name="McLay K."/>
            <person name="Plumb B."/>
            <person name="Davis J."/>
            <person name="Clee C."/>
            <person name="Oliver K."/>
            <person name="Clark R."/>
            <person name="Riddle C."/>
            <person name="Elliot D."/>
            <person name="Threadgold G."/>
            <person name="Harden G."/>
            <person name="Ware D."/>
            <person name="Begum S."/>
            <person name="Mortimore B."/>
            <person name="Kerry G."/>
            <person name="Heath P."/>
            <person name="Phillimore B."/>
            <person name="Tracey A."/>
            <person name="Corby N."/>
            <person name="Dunn M."/>
            <person name="Johnson C."/>
            <person name="Wood J."/>
            <person name="Clark S."/>
            <person name="Pelan S."/>
            <person name="Griffiths G."/>
            <person name="Smith M."/>
            <person name="Glithero R."/>
            <person name="Howden P."/>
            <person name="Barker N."/>
            <person name="Lloyd C."/>
            <person name="Stevens C."/>
            <person name="Harley J."/>
            <person name="Holt K."/>
            <person name="Panagiotidis G."/>
            <person name="Lovell J."/>
            <person name="Beasley H."/>
            <person name="Henderson C."/>
            <person name="Gordon D."/>
            <person name="Auger K."/>
            <person name="Wright D."/>
            <person name="Collins J."/>
            <person name="Raisen C."/>
            <person name="Dyer L."/>
            <person name="Leung K."/>
            <person name="Robertson L."/>
            <person name="Ambridge K."/>
            <person name="Leongamornlert D."/>
            <person name="McGuire S."/>
            <person name="Gilderthorp R."/>
            <person name="Griffiths C."/>
            <person name="Manthravadi D."/>
            <person name="Nichol S."/>
            <person name="Barker G."/>
            <person name="Whitehead S."/>
            <person name="Kay M."/>
            <person name="Brown J."/>
            <person name="Murnane C."/>
            <person name="Gray E."/>
            <person name="Humphries M."/>
            <person name="Sycamore N."/>
            <person name="Barker D."/>
            <person name="Saunders D."/>
            <person name="Wallis J."/>
            <person name="Babbage A."/>
            <person name="Hammond S."/>
            <person name="Mashreghi-Mohammadi M."/>
            <person name="Barr L."/>
            <person name="Martin S."/>
            <person name="Wray P."/>
            <person name="Ellington A."/>
            <person name="Matthews N."/>
            <person name="Ellwood M."/>
            <person name="Woodmansey R."/>
            <person name="Clark G."/>
            <person name="Cooper J."/>
            <person name="Tromans A."/>
            <person name="Grafham D."/>
            <person name="Skuce C."/>
            <person name="Pandian R."/>
            <person name="Andrews R."/>
            <person name="Harrison E."/>
            <person name="Kimberley A."/>
            <person name="Garnett J."/>
            <person name="Fosker N."/>
            <person name="Hall R."/>
            <person name="Garner P."/>
            <person name="Kelly D."/>
            <person name="Bird C."/>
            <person name="Palmer S."/>
            <person name="Gehring I."/>
            <person name="Berger A."/>
            <person name="Dooley C.M."/>
            <person name="Ersan-Urun Z."/>
            <person name="Eser C."/>
            <person name="Geiger H."/>
            <person name="Geisler M."/>
            <person name="Karotki L."/>
            <person name="Kirn A."/>
            <person name="Konantz J."/>
            <person name="Konantz M."/>
            <person name="Oberlander M."/>
            <person name="Rudolph-Geiger S."/>
            <person name="Teucke M."/>
            <person name="Lanz C."/>
            <person name="Raddatz G."/>
            <person name="Osoegawa K."/>
            <person name="Zhu B."/>
            <person name="Rapp A."/>
            <person name="Widaa S."/>
            <person name="Langford C."/>
            <person name="Yang F."/>
            <person name="Schuster S.C."/>
            <person name="Carter N.P."/>
            <person name="Harrow J."/>
            <person name="Ning Z."/>
            <person name="Herrero J."/>
            <person name="Searle S.M."/>
            <person name="Enright A."/>
            <person name="Geisler R."/>
            <person name="Plasterk R.H."/>
            <person name="Lee C."/>
            <person name="Westerfield M."/>
            <person name="de Jong P.J."/>
            <person name="Zon L.I."/>
            <person name="Postlethwait J.H."/>
            <person name="Nusslein-Volhard C."/>
            <person name="Hubbard T.J."/>
            <person name="Roest Crollius H."/>
            <person name="Rogers J."/>
            <person name="Stemple D.L."/>
        </authorList>
    </citation>
    <scope>NUCLEOTIDE SEQUENCE [LARGE SCALE GENOMIC DNA]</scope>
    <source>
        <strain>Tuebingen</strain>
    </source>
</reference>
<reference key="2">
    <citation type="submission" date="2007-12" db="EMBL/GenBank/DDBJ databases">
        <authorList>
            <consortium name="NIH - Zebrafish Gene Collection (ZGC) project"/>
        </authorList>
    </citation>
    <scope>NUCLEOTIDE SEQUENCE [LARGE SCALE MRNA]</scope>
</reference>